<evidence type="ECO:0000255" key="1">
    <source>
        <dbReference type="HAMAP-Rule" id="MF_01310"/>
    </source>
</evidence>
<evidence type="ECO:0000305" key="2"/>
<protein>
    <recommendedName>
        <fullName evidence="1">Small ribosomal subunit protein uS11</fullName>
    </recommendedName>
    <alternativeName>
        <fullName evidence="2">30S ribosomal protein S11</fullName>
    </alternativeName>
</protein>
<name>RS11_THENN</name>
<organism>
    <name type="scientific">Thermotoga neapolitana (strain ATCC 49049 / DSM 4359 / NBRC 107923 / NS-E)</name>
    <dbReference type="NCBI Taxonomy" id="309803"/>
    <lineage>
        <taxon>Bacteria</taxon>
        <taxon>Thermotogati</taxon>
        <taxon>Thermotogota</taxon>
        <taxon>Thermotogae</taxon>
        <taxon>Thermotogales</taxon>
        <taxon>Thermotogaceae</taxon>
        <taxon>Thermotoga</taxon>
    </lineage>
</organism>
<accession>B9K8B2</accession>
<proteinExistence type="inferred from homology"/>
<sequence>MARKKGTSTRKKQKKLSFDYGVVHIKSTFNNTIITLTDKDGNTLTWASGGTVGFEGTRKGTPYAAQLAADKVAREALRMGIKRVDVLVKGPGPGREPAIRTLQGAGLEINQIKDVTPIPFNGCRPKKRRRV</sequence>
<dbReference type="EMBL" id="CP000916">
    <property type="protein sequence ID" value="ACM23195.1"/>
    <property type="molecule type" value="Genomic_DNA"/>
</dbReference>
<dbReference type="RefSeq" id="WP_015919511.1">
    <property type="nucleotide sequence ID" value="NC_011978.1"/>
</dbReference>
<dbReference type="SMR" id="B9K8B2"/>
<dbReference type="STRING" id="309803.CTN_1019"/>
<dbReference type="KEGG" id="tna:CTN_1019"/>
<dbReference type="eggNOG" id="COG0100">
    <property type="taxonomic scope" value="Bacteria"/>
</dbReference>
<dbReference type="HOGENOM" id="CLU_072439_5_0_0"/>
<dbReference type="Proteomes" id="UP000000445">
    <property type="component" value="Chromosome"/>
</dbReference>
<dbReference type="GO" id="GO:1990904">
    <property type="term" value="C:ribonucleoprotein complex"/>
    <property type="evidence" value="ECO:0007669"/>
    <property type="project" value="UniProtKB-KW"/>
</dbReference>
<dbReference type="GO" id="GO:0005840">
    <property type="term" value="C:ribosome"/>
    <property type="evidence" value="ECO:0007669"/>
    <property type="project" value="UniProtKB-KW"/>
</dbReference>
<dbReference type="GO" id="GO:0019843">
    <property type="term" value="F:rRNA binding"/>
    <property type="evidence" value="ECO:0007669"/>
    <property type="project" value="UniProtKB-UniRule"/>
</dbReference>
<dbReference type="GO" id="GO:0003735">
    <property type="term" value="F:structural constituent of ribosome"/>
    <property type="evidence" value="ECO:0007669"/>
    <property type="project" value="InterPro"/>
</dbReference>
<dbReference type="GO" id="GO:0006412">
    <property type="term" value="P:translation"/>
    <property type="evidence" value="ECO:0007669"/>
    <property type="project" value="UniProtKB-UniRule"/>
</dbReference>
<dbReference type="FunFam" id="3.30.420.80:FF:000001">
    <property type="entry name" value="30S ribosomal protein S11"/>
    <property type="match status" value="1"/>
</dbReference>
<dbReference type="Gene3D" id="3.30.420.80">
    <property type="entry name" value="Ribosomal protein S11"/>
    <property type="match status" value="1"/>
</dbReference>
<dbReference type="HAMAP" id="MF_01310">
    <property type="entry name" value="Ribosomal_uS11"/>
    <property type="match status" value="1"/>
</dbReference>
<dbReference type="InterPro" id="IPR001971">
    <property type="entry name" value="Ribosomal_uS11"/>
</dbReference>
<dbReference type="InterPro" id="IPR019981">
    <property type="entry name" value="Ribosomal_uS11_bac-type"/>
</dbReference>
<dbReference type="InterPro" id="IPR018102">
    <property type="entry name" value="Ribosomal_uS11_CS"/>
</dbReference>
<dbReference type="InterPro" id="IPR036967">
    <property type="entry name" value="Ribosomal_uS11_sf"/>
</dbReference>
<dbReference type="NCBIfam" id="NF003698">
    <property type="entry name" value="PRK05309.1"/>
    <property type="match status" value="1"/>
</dbReference>
<dbReference type="NCBIfam" id="TIGR03632">
    <property type="entry name" value="uS11_bact"/>
    <property type="match status" value="1"/>
</dbReference>
<dbReference type="PANTHER" id="PTHR11759">
    <property type="entry name" value="40S RIBOSOMAL PROTEIN S14/30S RIBOSOMAL PROTEIN S11"/>
    <property type="match status" value="1"/>
</dbReference>
<dbReference type="Pfam" id="PF00411">
    <property type="entry name" value="Ribosomal_S11"/>
    <property type="match status" value="1"/>
</dbReference>
<dbReference type="PIRSF" id="PIRSF002131">
    <property type="entry name" value="Ribosomal_S11"/>
    <property type="match status" value="1"/>
</dbReference>
<dbReference type="SUPFAM" id="SSF53137">
    <property type="entry name" value="Translational machinery components"/>
    <property type="match status" value="1"/>
</dbReference>
<dbReference type="PROSITE" id="PS00054">
    <property type="entry name" value="RIBOSOMAL_S11"/>
    <property type="match status" value="1"/>
</dbReference>
<feature type="chain" id="PRO_1000165575" description="Small ribosomal subunit protein uS11">
    <location>
        <begin position="1"/>
        <end position="131"/>
    </location>
</feature>
<gene>
    <name evidence="1" type="primary">rpsK</name>
    <name type="ordered locus">CTN_1019</name>
</gene>
<keyword id="KW-0687">Ribonucleoprotein</keyword>
<keyword id="KW-0689">Ribosomal protein</keyword>
<keyword id="KW-0694">RNA-binding</keyword>
<keyword id="KW-0699">rRNA-binding</keyword>
<reference key="1">
    <citation type="submission" date="2007-11" db="EMBL/GenBank/DDBJ databases">
        <title>The genome sequence of the hyperthermophilic bacterium Thermotoga neapolitana.</title>
        <authorList>
            <person name="Lim S.K."/>
            <person name="Kim J.S."/>
            <person name="Cha S.H."/>
            <person name="Park B.C."/>
            <person name="Lee D.S."/>
            <person name="Tae H.S."/>
            <person name="Kim S.-J."/>
            <person name="Kim J.J."/>
            <person name="Park K.J."/>
            <person name="Lee S.Y."/>
        </authorList>
    </citation>
    <scope>NUCLEOTIDE SEQUENCE [LARGE SCALE GENOMIC DNA]</scope>
    <source>
        <strain>ATCC 49049 / DSM 4359 / NBRC 107923 / NS-E</strain>
    </source>
</reference>
<comment type="function">
    <text evidence="1">Located on the platform of the 30S subunit, it bridges several disparate RNA helices of the 16S rRNA. Forms part of the Shine-Dalgarno cleft in the 70S ribosome.</text>
</comment>
<comment type="subunit">
    <text evidence="1">Part of the 30S ribosomal subunit. Interacts with proteins S7 and S18. Binds to IF-3.</text>
</comment>
<comment type="similarity">
    <text evidence="1">Belongs to the universal ribosomal protein uS11 family.</text>
</comment>